<protein>
    <recommendedName>
        <fullName evidence="1">Threonine--tRNA ligase</fullName>
        <ecNumber evidence="1">6.1.1.3</ecNumber>
    </recommendedName>
    <alternativeName>
        <fullName evidence="1">Threonyl-tRNA synthetase</fullName>
        <shortName evidence="1">ThrRS</shortName>
    </alternativeName>
</protein>
<accession>Q67LA3</accession>
<comment type="function">
    <text evidence="1">Catalyzes the attachment of threonine to tRNA(Thr) in a two-step reaction: L-threonine is first activated by ATP to form Thr-AMP and then transferred to the acceptor end of tRNA(Thr). Also edits incorrectly charged L-seryl-tRNA(Thr).</text>
</comment>
<comment type="catalytic activity">
    <reaction evidence="1">
        <text>tRNA(Thr) + L-threonine + ATP = L-threonyl-tRNA(Thr) + AMP + diphosphate + H(+)</text>
        <dbReference type="Rhea" id="RHEA:24624"/>
        <dbReference type="Rhea" id="RHEA-COMP:9670"/>
        <dbReference type="Rhea" id="RHEA-COMP:9704"/>
        <dbReference type="ChEBI" id="CHEBI:15378"/>
        <dbReference type="ChEBI" id="CHEBI:30616"/>
        <dbReference type="ChEBI" id="CHEBI:33019"/>
        <dbReference type="ChEBI" id="CHEBI:57926"/>
        <dbReference type="ChEBI" id="CHEBI:78442"/>
        <dbReference type="ChEBI" id="CHEBI:78534"/>
        <dbReference type="ChEBI" id="CHEBI:456215"/>
        <dbReference type="EC" id="6.1.1.3"/>
    </reaction>
</comment>
<comment type="cofactor">
    <cofactor evidence="1">
        <name>Zn(2+)</name>
        <dbReference type="ChEBI" id="CHEBI:29105"/>
    </cofactor>
    <text evidence="1">Binds 1 zinc ion per subunit.</text>
</comment>
<comment type="subunit">
    <text evidence="1">Homodimer.</text>
</comment>
<comment type="subcellular location">
    <subcellularLocation>
        <location evidence="1">Cytoplasm</location>
    </subcellularLocation>
</comment>
<comment type="similarity">
    <text evidence="1">Belongs to the class-II aminoacyl-tRNA synthetase family.</text>
</comment>
<feature type="chain" id="PRO_0000101068" description="Threonine--tRNA ligase">
    <location>
        <begin position="1"/>
        <end position="651"/>
    </location>
</feature>
<feature type="domain" description="TGS" evidence="2">
    <location>
        <begin position="1"/>
        <end position="64"/>
    </location>
</feature>
<feature type="region of interest" description="Catalytic" evidence="1">
    <location>
        <begin position="245"/>
        <end position="535"/>
    </location>
</feature>
<feature type="binding site" evidence="1">
    <location>
        <position position="336"/>
    </location>
    <ligand>
        <name>Zn(2+)</name>
        <dbReference type="ChEBI" id="CHEBI:29105"/>
    </ligand>
</feature>
<feature type="binding site" evidence="1">
    <location>
        <position position="387"/>
    </location>
    <ligand>
        <name>Zn(2+)</name>
        <dbReference type="ChEBI" id="CHEBI:29105"/>
    </ligand>
</feature>
<feature type="binding site" evidence="1">
    <location>
        <position position="512"/>
    </location>
    <ligand>
        <name>Zn(2+)</name>
        <dbReference type="ChEBI" id="CHEBI:29105"/>
    </ligand>
</feature>
<proteinExistence type="inferred from homology"/>
<sequence>MSSVVHVTLPDGSVREYPQGITIAEAVAQIGPRLAKAALAAKVDGRLVDLSARLEKDCTLQVLTFKDEEGREVFRHTSTHIMAQAVKRLFPEAKLTVGPPLENSFYYDFDLPRPLTPEDLEKIEAEMAKIVEADYPIVRQEVDREEAKRFFAERGEDYKVLLVDKIPEDEVVSIYTQGEFTDLCVGPHLPSTGRVKAFKLLSVAGAYWEGNQANKQLQRVYGTSFESKKDLEDYLFRLEEARRRDHRRLGPELGLYRFEEVAPGFAFWLDKGYRLYRELENWSRKLQEARGYEEVSTPWIVSSKLYETSGHWQHYRQNMFEIRAEDQDFATKPMNCPCHCVLYKSQIRSYRDLPLKIAEYGPLSRFEASGTLHGLLRVRGFHQDDAHLFVRPDQIEEQIREVIGLVDTIYGTLGLEYEIKLSTRPEDFMGDIELWNEAEAALARALDGMGRSYKLNPGDGAFYGPKLDFDVTDALGRKWQCATVQLDFQLPIKFDLTYIGEDGKEHRPVMIHRAIMGTLERFIGILTEHYAGNFPLWMAPVQARVLPITDRHHAYAGEVVAKLQEAGLRVEGDYRNEKVGYKIREAELLKIPFILVVGDKEAEAGAVAVRRRGMKDLGPMPLADFLALAQSEIASKAMDEACRKAASGTRD</sequence>
<name>SYT_SYMTH</name>
<gene>
    <name evidence="1" type="primary">thrS</name>
    <name type="ordered locus">STH2558</name>
</gene>
<organism>
    <name type="scientific">Symbiobacterium thermophilum (strain DSM 24528 / JCM 14929 / IAM 14863 / T)</name>
    <dbReference type="NCBI Taxonomy" id="292459"/>
    <lineage>
        <taxon>Bacteria</taxon>
        <taxon>Bacillati</taxon>
        <taxon>Bacillota</taxon>
        <taxon>Clostridia</taxon>
        <taxon>Eubacteriales</taxon>
        <taxon>Symbiobacteriaceae</taxon>
        <taxon>Symbiobacterium</taxon>
    </lineage>
</organism>
<reference key="1">
    <citation type="journal article" date="2004" name="Nucleic Acids Res.">
        <title>Genome sequence of Symbiobacterium thermophilum, an uncultivable bacterium that depends on microbial commensalism.</title>
        <authorList>
            <person name="Ueda K."/>
            <person name="Yamashita A."/>
            <person name="Ishikawa J."/>
            <person name="Shimada M."/>
            <person name="Watsuji T."/>
            <person name="Morimura K."/>
            <person name="Ikeda H."/>
            <person name="Hattori M."/>
            <person name="Beppu T."/>
        </authorList>
    </citation>
    <scope>NUCLEOTIDE SEQUENCE [LARGE SCALE GENOMIC DNA]</scope>
    <source>
        <strain>DSM 24528 / JCM 14929 / IAM 14863 / T</strain>
    </source>
</reference>
<dbReference type="EC" id="6.1.1.3" evidence="1"/>
<dbReference type="EMBL" id="AP006840">
    <property type="protein sequence ID" value="BAD41543.1"/>
    <property type="molecule type" value="Genomic_DNA"/>
</dbReference>
<dbReference type="RefSeq" id="WP_011196681.1">
    <property type="nucleotide sequence ID" value="NC_006177.1"/>
</dbReference>
<dbReference type="SMR" id="Q67LA3"/>
<dbReference type="STRING" id="292459.STH2558"/>
<dbReference type="KEGG" id="sth:STH2558"/>
<dbReference type="eggNOG" id="COG0441">
    <property type="taxonomic scope" value="Bacteria"/>
</dbReference>
<dbReference type="HOGENOM" id="CLU_008554_0_1_9"/>
<dbReference type="OrthoDB" id="9802304at2"/>
<dbReference type="Proteomes" id="UP000000417">
    <property type="component" value="Chromosome"/>
</dbReference>
<dbReference type="GO" id="GO:0005737">
    <property type="term" value="C:cytoplasm"/>
    <property type="evidence" value="ECO:0007669"/>
    <property type="project" value="UniProtKB-SubCell"/>
</dbReference>
<dbReference type="GO" id="GO:0005524">
    <property type="term" value="F:ATP binding"/>
    <property type="evidence" value="ECO:0007669"/>
    <property type="project" value="UniProtKB-UniRule"/>
</dbReference>
<dbReference type="GO" id="GO:0140096">
    <property type="term" value="F:catalytic activity, acting on a protein"/>
    <property type="evidence" value="ECO:0007669"/>
    <property type="project" value="UniProtKB-ARBA"/>
</dbReference>
<dbReference type="GO" id="GO:0046872">
    <property type="term" value="F:metal ion binding"/>
    <property type="evidence" value="ECO:0007669"/>
    <property type="project" value="UniProtKB-KW"/>
</dbReference>
<dbReference type="GO" id="GO:0004829">
    <property type="term" value="F:threonine-tRNA ligase activity"/>
    <property type="evidence" value="ECO:0007669"/>
    <property type="project" value="UniProtKB-UniRule"/>
</dbReference>
<dbReference type="GO" id="GO:0016740">
    <property type="term" value="F:transferase activity"/>
    <property type="evidence" value="ECO:0007669"/>
    <property type="project" value="UniProtKB-ARBA"/>
</dbReference>
<dbReference type="GO" id="GO:0000049">
    <property type="term" value="F:tRNA binding"/>
    <property type="evidence" value="ECO:0007669"/>
    <property type="project" value="UniProtKB-KW"/>
</dbReference>
<dbReference type="GO" id="GO:0006435">
    <property type="term" value="P:threonyl-tRNA aminoacylation"/>
    <property type="evidence" value="ECO:0007669"/>
    <property type="project" value="UniProtKB-UniRule"/>
</dbReference>
<dbReference type="CDD" id="cd01667">
    <property type="entry name" value="TGS_ThrRS"/>
    <property type="match status" value="1"/>
</dbReference>
<dbReference type="CDD" id="cd00860">
    <property type="entry name" value="ThrRS_anticodon"/>
    <property type="match status" value="1"/>
</dbReference>
<dbReference type="CDD" id="cd00771">
    <property type="entry name" value="ThrRS_core"/>
    <property type="match status" value="1"/>
</dbReference>
<dbReference type="FunFam" id="3.10.20.30:FF:000005">
    <property type="entry name" value="Threonine--tRNA ligase"/>
    <property type="match status" value="1"/>
</dbReference>
<dbReference type="FunFam" id="3.30.54.20:FF:000002">
    <property type="entry name" value="Threonine--tRNA ligase"/>
    <property type="match status" value="1"/>
</dbReference>
<dbReference type="FunFam" id="3.30.930.10:FF:000002">
    <property type="entry name" value="Threonine--tRNA ligase"/>
    <property type="match status" value="1"/>
</dbReference>
<dbReference type="FunFam" id="3.40.50.800:FF:000001">
    <property type="entry name" value="Threonine--tRNA ligase"/>
    <property type="match status" value="1"/>
</dbReference>
<dbReference type="FunFam" id="3.30.980.10:FF:000005">
    <property type="entry name" value="Threonyl-tRNA synthetase, mitochondrial"/>
    <property type="match status" value="1"/>
</dbReference>
<dbReference type="Gene3D" id="3.10.20.30">
    <property type="match status" value="1"/>
</dbReference>
<dbReference type="Gene3D" id="3.30.54.20">
    <property type="match status" value="1"/>
</dbReference>
<dbReference type="Gene3D" id="3.40.50.800">
    <property type="entry name" value="Anticodon-binding domain"/>
    <property type="match status" value="1"/>
</dbReference>
<dbReference type="Gene3D" id="3.30.930.10">
    <property type="entry name" value="Bira Bifunctional Protein, Domain 2"/>
    <property type="match status" value="1"/>
</dbReference>
<dbReference type="Gene3D" id="3.30.980.10">
    <property type="entry name" value="Threonyl-trna Synthetase, Chain A, domain 2"/>
    <property type="match status" value="1"/>
</dbReference>
<dbReference type="HAMAP" id="MF_00184">
    <property type="entry name" value="Thr_tRNA_synth"/>
    <property type="match status" value="1"/>
</dbReference>
<dbReference type="InterPro" id="IPR002314">
    <property type="entry name" value="aa-tRNA-synt_IIb"/>
</dbReference>
<dbReference type="InterPro" id="IPR006195">
    <property type="entry name" value="aa-tRNA-synth_II"/>
</dbReference>
<dbReference type="InterPro" id="IPR045864">
    <property type="entry name" value="aa-tRNA-synth_II/BPL/LPL"/>
</dbReference>
<dbReference type="InterPro" id="IPR004154">
    <property type="entry name" value="Anticodon-bd"/>
</dbReference>
<dbReference type="InterPro" id="IPR036621">
    <property type="entry name" value="Anticodon-bd_dom_sf"/>
</dbReference>
<dbReference type="InterPro" id="IPR012675">
    <property type="entry name" value="Beta-grasp_dom_sf"/>
</dbReference>
<dbReference type="InterPro" id="IPR004095">
    <property type="entry name" value="TGS"/>
</dbReference>
<dbReference type="InterPro" id="IPR012676">
    <property type="entry name" value="TGS-like"/>
</dbReference>
<dbReference type="InterPro" id="IPR002320">
    <property type="entry name" value="Thr-tRNA-ligase_IIa"/>
</dbReference>
<dbReference type="InterPro" id="IPR018163">
    <property type="entry name" value="Thr/Ala-tRNA-synth_IIc_edit"/>
</dbReference>
<dbReference type="InterPro" id="IPR047246">
    <property type="entry name" value="ThrRS_anticodon"/>
</dbReference>
<dbReference type="InterPro" id="IPR033728">
    <property type="entry name" value="ThrRS_core"/>
</dbReference>
<dbReference type="InterPro" id="IPR012947">
    <property type="entry name" value="tRNA_SAD"/>
</dbReference>
<dbReference type="NCBIfam" id="TIGR00418">
    <property type="entry name" value="thrS"/>
    <property type="match status" value="1"/>
</dbReference>
<dbReference type="PANTHER" id="PTHR11451:SF44">
    <property type="entry name" value="THREONINE--TRNA LIGASE, CHLOROPLASTIC_MITOCHONDRIAL 2"/>
    <property type="match status" value="1"/>
</dbReference>
<dbReference type="PANTHER" id="PTHR11451">
    <property type="entry name" value="THREONINE-TRNA LIGASE"/>
    <property type="match status" value="1"/>
</dbReference>
<dbReference type="Pfam" id="PF03129">
    <property type="entry name" value="HGTP_anticodon"/>
    <property type="match status" value="1"/>
</dbReference>
<dbReference type="Pfam" id="PF02824">
    <property type="entry name" value="TGS"/>
    <property type="match status" value="1"/>
</dbReference>
<dbReference type="Pfam" id="PF00587">
    <property type="entry name" value="tRNA-synt_2b"/>
    <property type="match status" value="1"/>
</dbReference>
<dbReference type="Pfam" id="PF07973">
    <property type="entry name" value="tRNA_SAD"/>
    <property type="match status" value="1"/>
</dbReference>
<dbReference type="PRINTS" id="PR01047">
    <property type="entry name" value="TRNASYNTHTHR"/>
</dbReference>
<dbReference type="SMART" id="SM00863">
    <property type="entry name" value="tRNA_SAD"/>
    <property type="match status" value="1"/>
</dbReference>
<dbReference type="SUPFAM" id="SSF52954">
    <property type="entry name" value="Class II aaRS ABD-related"/>
    <property type="match status" value="1"/>
</dbReference>
<dbReference type="SUPFAM" id="SSF55681">
    <property type="entry name" value="Class II aaRS and biotin synthetases"/>
    <property type="match status" value="1"/>
</dbReference>
<dbReference type="SUPFAM" id="SSF81271">
    <property type="entry name" value="TGS-like"/>
    <property type="match status" value="1"/>
</dbReference>
<dbReference type="SUPFAM" id="SSF55186">
    <property type="entry name" value="ThrRS/AlaRS common domain"/>
    <property type="match status" value="1"/>
</dbReference>
<dbReference type="PROSITE" id="PS50862">
    <property type="entry name" value="AA_TRNA_LIGASE_II"/>
    <property type="match status" value="1"/>
</dbReference>
<dbReference type="PROSITE" id="PS51880">
    <property type="entry name" value="TGS"/>
    <property type="match status" value="1"/>
</dbReference>
<evidence type="ECO:0000255" key="1">
    <source>
        <dbReference type="HAMAP-Rule" id="MF_00184"/>
    </source>
</evidence>
<evidence type="ECO:0000255" key="2">
    <source>
        <dbReference type="PROSITE-ProRule" id="PRU01228"/>
    </source>
</evidence>
<keyword id="KW-0030">Aminoacyl-tRNA synthetase</keyword>
<keyword id="KW-0067">ATP-binding</keyword>
<keyword id="KW-0963">Cytoplasm</keyword>
<keyword id="KW-0436">Ligase</keyword>
<keyword id="KW-0479">Metal-binding</keyword>
<keyword id="KW-0547">Nucleotide-binding</keyword>
<keyword id="KW-0648">Protein biosynthesis</keyword>
<keyword id="KW-1185">Reference proteome</keyword>
<keyword id="KW-0694">RNA-binding</keyword>
<keyword id="KW-0820">tRNA-binding</keyword>
<keyword id="KW-0862">Zinc</keyword>